<organism>
    <name type="scientific">Mus musculus</name>
    <name type="common">Mouse</name>
    <dbReference type="NCBI Taxonomy" id="10090"/>
    <lineage>
        <taxon>Eukaryota</taxon>
        <taxon>Metazoa</taxon>
        <taxon>Chordata</taxon>
        <taxon>Craniata</taxon>
        <taxon>Vertebrata</taxon>
        <taxon>Euteleostomi</taxon>
        <taxon>Mammalia</taxon>
        <taxon>Eutheria</taxon>
        <taxon>Euarchontoglires</taxon>
        <taxon>Glires</taxon>
        <taxon>Rodentia</taxon>
        <taxon>Myomorpha</taxon>
        <taxon>Muroidea</taxon>
        <taxon>Muridae</taxon>
        <taxon>Murinae</taxon>
        <taxon>Mus</taxon>
        <taxon>Mus</taxon>
    </lineage>
</organism>
<dbReference type="EC" id="5.1.-.-"/>
<dbReference type="EMBL" id="BC120567">
    <property type="protein sequence ID" value="AAI20568.1"/>
    <property type="molecule type" value="mRNA"/>
</dbReference>
<dbReference type="EMBL" id="BC137796">
    <property type="protein sequence ID" value="AAI37797.1"/>
    <property type="molecule type" value="mRNA"/>
</dbReference>
<dbReference type="CCDS" id="CCDS35688.1"/>
<dbReference type="RefSeq" id="NP_001074785.1">
    <property type="nucleotide sequence ID" value="NM_001081316.2"/>
</dbReference>
<dbReference type="RefSeq" id="XP_017176672.1">
    <property type="nucleotide sequence ID" value="XM_017321183.3"/>
</dbReference>
<dbReference type="RefSeq" id="XP_017176673.1">
    <property type="nucleotide sequence ID" value="XM_017321184.1"/>
</dbReference>
<dbReference type="RefSeq" id="XP_030110808.1">
    <property type="nucleotide sequence ID" value="XM_030254948.1"/>
</dbReference>
<dbReference type="RefSeq" id="XP_036021587.1">
    <property type="nucleotide sequence ID" value="XM_036165694.1"/>
</dbReference>
<dbReference type="SMR" id="Q0VBN2"/>
<dbReference type="FunCoup" id="Q0VBN2">
    <property type="interactions" value="30"/>
</dbReference>
<dbReference type="STRING" id="10090.ENSMUSP00000043570"/>
<dbReference type="GlyCosmos" id="Q0VBN2">
    <property type="glycosylation" value="5 sites, No reported glycans"/>
</dbReference>
<dbReference type="GlyGen" id="Q0VBN2">
    <property type="glycosylation" value="5 sites"/>
</dbReference>
<dbReference type="iPTMnet" id="Q0VBN2"/>
<dbReference type="PhosphoSitePlus" id="Q0VBN2"/>
<dbReference type="CPTAC" id="non-CPTAC-3457"/>
<dbReference type="PaxDb" id="10090-ENSMUSP00000043570"/>
<dbReference type="ProteomicsDB" id="277503"/>
<dbReference type="Antibodypedia" id="77494">
    <property type="antibodies" value="5 antibodies from 5 providers"/>
</dbReference>
<dbReference type="Ensembl" id="ENSMUST00000035462.7">
    <property type="protein sequence ID" value="ENSMUSP00000043570.6"/>
    <property type="gene ID" value="ENSMUSG00000038702.7"/>
</dbReference>
<dbReference type="GeneID" id="319901"/>
<dbReference type="KEGG" id="mmu:319901"/>
<dbReference type="UCSC" id="uc007chy.1">
    <property type="organism name" value="mouse"/>
</dbReference>
<dbReference type="AGR" id="MGI:2442948"/>
<dbReference type="CTD" id="92126"/>
<dbReference type="MGI" id="MGI:2442948">
    <property type="gene designation" value="Dsel"/>
</dbReference>
<dbReference type="VEuPathDB" id="HostDB:ENSMUSG00000038702"/>
<dbReference type="eggNOG" id="ENOG502QPWZ">
    <property type="taxonomic scope" value="Eukaryota"/>
</dbReference>
<dbReference type="GeneTree" id="ENSGT00390000006522"/>
<dbReference type="HOGENOM" id="CLU_011348_0_0_1"/>
<dbReference type="InParanoid" id="Q0VBN2"/>
<dbReference type="OMA" id="WVITEEM"/>
<dbReference type="OrthoDB" id="5946629at2759"/>
<dbReference type="PhylomeDB" id="Q0VBN2"/>
<dbReference type="TreeFam" id="TF334118"/>
<dbReference type="BRENDA" id="5.1.3.19">
    <property type="organism ID" value="3474"/>
</dbReference>
<dbReference type="Reactome" id="R-MMU-2022923">
    <property type="pathway name" value="Dermatan sulfate biosynthesis"/>
</dbReference>
<dbReference type="BioGRID-ORCS" id="319901">
    <property type="hits" value="3 hits in 76 CRISPR screens"/>
</dbReference>
<dbReference type="PRO" id="PR:Q0VBN2"/>
<dbReference type="Proteomes" id="UP000000589">
    <property type="component" value="Chromosome 1"/>
</dbReference>
<dbReference type="RNAct" id="Q0VBN2">
    <property type="molecule type" value="protein"/>
</dbReference>
<dbReference type="Bgee" id="ENSMUSG00000038702">
    <property type="expression patterns" value="Expressed in condyle and 214 other cell types or tissues"/>
</dbReference>
<dbReference type="GO" id="GO:0016020">
    <property type="term" value="C:membrane"/>
    <property type="evidence" value="ECO:0007669"/>
    <property type="project" value="UniProtKB-SubCell"/>
</dbReference>
<dbReference type="GO" id="GO:0047757">
    <property type="term" value="F:chondroitin-glucuronate 5-epimerase activity"/>
    <property type="evidence" value="ECO:0000315"/>
    <property type="project" value="MGI"/>
</dbReference>
<dbReference type="GO" id="GO:0008146">
    <property type="term" value="F:sulfotransferase activity"/>
    <property type="evidence" value="ECO:0007669"/>
    <property type="project" value="InterPro"/>
</dbReference>
<dbReference type="GO" id="GO:0050654">
    <property type="term" value="P:chondroitin sulfate proteoglycan metabolic process"/>
    <property type="evidence" value="ECO:0000315"/>
    <property type="project" value="MGI"/>
</dbReference>
<dbReference type="GO" id="GO:0050655">
    <property type="term" value="P:dermatan sulfate proteoglycan metabolic process"/>
    <property type="evidence" value="ECO:0000315"/>
    <property type="project" value="MGI"/>
</dbReference>
<dbReference type="FunFam" id="1.50.10.100:FF:000001">
    <property type="entry name" value="dermatan-sulfate epimerase isoform X1"/>
    <property type="match status" value="1"/>
</dbReference>
<dbReference type="FunFam" id="2.70.98.70:FF:000001">
    <property type="entry name" value="dermatan-sulfate epimerase isoform X1"/>
    <property type="match status" value="1"/>
</dbReference>
<dbReference type="Gene3D" id="2.70.98.70">
    <property type="match status" value="1"/>
</dbReference>
<dbReference type="Gene3D" id="1.50.10.100">
    <property type="entry name" value="Chondroitin AC/alginate lyase"/>
    <property type="match status" value="1"/>
</dbReference>
<dbReference type="Gene3D" id="3.40.50.300">
    <property type="entry name" value="P-loop containing nucleotide triphosphate hydrolases"/>
    <property type="match status" value="1"/>
</dbReference>
<dbReference type="InterPro" id="IPR008929">
    <property type="entry name" value="Chondroitin_lyas"/>
</dbReference>
<dbReference type="InterPro" id="IPR052447">
    <property type="entry name" value="Dermatan-Sulfate_Isomerase"/>
</dbReference>
<dbReference type="InterPro" id="IPR027417">
    <property type="entry name" value="P-loop_NTPase"/>
</dbReference>
<dbReference type="InterPro" id="IPR000863">
    <property type="entry name" value="Sulfotransferase_dom"/>
</dbReference>
<dbReference type="PANTHER" id="PTHR15532">
    <property type="match status" value="1"/>
</dbReference>
<dbReference type="PANTHER" id="PTHR15532:SF2">
    <property type="entry name" value="DERMATAN-SULFATE EPIMERASE-LIKE PROTEIN"/>
    <property type="match status" value="1"/>
</dbReference>
<dbReference type="Pfam" id="PF00685">
    <property type="entry name" value="Sulfotransfer_1"/>
    <property type="match status" value="1"/>
</dbReference>
<dbReference type="SUPFAM" id="SSF48230">
    <property type="entry name" value="Chondroitin AC/alginate lyase"/>
    <property type="match status" value="1"/>
</dbReference>
<dbReference type="SUPFAM" id="SSF52540">
    <property type="entry name" value="P-loop containing nucleoside triphosphate hydrolases"/>
    <property type="match status" value="1"/>
</dbReference>
<accession>Q0VBN2</accession>
<accession>B2RQ79</accession>
<proteinExistence type="evidence at transcript level"/>
<reference key="1">
    <citation type="journal article" date="2004" name="Genome Res.">
        <title>The status, quality, and expansion of the NIH full-length cDNA project: the Mammalian Gene Collection (MGC).</title>
        <authorList>
            <consortium name="The MGC Project Team"/>
        </authorList>
    </citation>
    <scope>NUCLEOTIDE SEQUENCE [LARGE SCALE MRNA]</scope>
    <source>
        <tissue>Brain</tissue>
    </source>
</reference>
<protein>
    <recommendedName>
        <fullName>Dermatan-sulfate epimerase-like protein</fullName>
        <ecNumber>5.1.-.-</ecNumber>
    </recommendedName>
</protein>
<comment type="subcellular location">
    <subcellularLocation>
        <location evidence="2">Membrane</location>
        <topology evidence="2">Multi-pass membrane protein</topology>
    </subcellularLocation>
</comment>
<comment type="similarity">
    <text evidence="2">Belongs to the dermatan-sulfate isomerase family.</text>
</comment>
<name>DSEL_MOUSE</name>
<feature type="signal peptide" evidence="1">
    <location>
        <begin position="1"/>
        <end position="22"/>
    </location>
</feature>
<feature type="chain" id="PRO_0000278289" description="Dermatan-sulfate epimerase-like protein">
    <location>
        <begin position="23"/>
        <end position="1207"/>
    </location>
</feature>
<feature type="transmembrane region" description="Helical" evidence="1">
    <location>
        <begin position="761"/>
        <end position="781"/>
    </location>
</feature>
<feature type="transmembrane region" description="Helical" evidence="1">
    <location>
        <begin position="798"/>
        <end position="818"/>
    </location>
</feature>
<feature type="glycosylation site" description="N-linked (GlcNAc...) asparagine" evidence="1">
    <location>
        <position position="28"/>
    </location>
</feature>
<feature type="glycosylation site" description="N-linked (GlcNAc...) asparagine" evidence="1">
    <location>
        <position position="661"/>
    </location>
</feature>
<feature type="glycosylation site" description="N-linked (GlcNAc...) asparagine" evidence="1">
    <location>
        <position position="683"/>
    </location>
</feature>
<feature type="glycosylation site" description="N-linked (GlcNAc...) asparagine" evidence="1">
    <location>
        <position position="704"/>
    </location>
</feature>
<feature type="glycosylation site" description="N-linked (GlcNAc...) asparagine" evidence="1">
    <location>
        <position position="869"/>
    </location>
</feature>
<evidence type="ECO:0000255" key="1"/>
<evidence type="ECO:0000305" key="2"/>
<gene>
    <name type="primary">Dsel</name>
</gene>
<sequence length="1207" mass="138868">MAFMFTEHLLFLTLMMCSFSTCEESVSNYSEWAVFTDDIQWLKSQKIQDFKLNRRLHPNLYFDAGDIQTLKQKSRTSHLHIFRAIKSAVTIMLSNPSYYLPPPKHAEFAAKWNEIYGNNLPPLALYCLLCPEDKVAFEFVMEYMDRMVSYKDWLVENAPGDEVPVGHSLTGFATAFDFLYNLLGNQRKQKYLEKIWIVTEEMYEYSKIRSWGKQLLHNHQATNMIALLIGALVTGVDKGSKANIWKQVVVDVMEKTMFLLKHIVDGSLDEGVAYGSYTSKSVTQYVFLAQRHFNINNFDNNWLKMHFWFYYATLLPGYQRTVGIADSNYNWFYGPESQLVFLDKFILQNGAGNWLAQQIRKHRPKDGPMVPSTAQRWSTLHTEYIWYDPTLTPQPPVDFGTAKMHTFPNWGVVTYGGGLPNTQTNTFVSFKSGKLGGRAVYDIVHFQPYSWIDGWRSFNPGHEHPDQNSFTFAPNGQVFVSEALYGPKLSHLNNVLVFAPSPSSQCNQPWEGQLGECAQWLKWTGEEVGDAAGEVITAAQHGDRMFVSGEAVSAYSSAMRLKSVYRALLLLNSQTLLVVDHIERQETSPINSVSAFFHNLDIDFKYIPYKFMNRYNGAMMDVWDAHYKMFWFDHHGNSPVANIQEAEQAAEFKKRWTQFVNVTFHMESTITRIAYVFYGPYVNVSSCRFIDSSSSGLQISLHVNSTEHSVSVVTDYQNLKSRFSYLGFGGFASVANQGQITRFGLGTQEIVNPVRHDKVNFPFGFKFNIAVGFILCISLVILTFQWRFYLSFRKLMRCVLILVIALWFIELLDVWSTCTQPICAKWTRTEAKANEKVMISEGHHVDLPNVIITSLPGSGAEILKQLFFNSSDFLYIRIPTAYMDIPETEFEIDSFVDACEWKVSDIRSGHFHLLRGWLQSLVQDTKLHLQNIHLHETSRSKLAQYFTTNKDKKRKLKRRESLQDQRSRIKGPFDRDAEYIRALRRHLVYYPSARPVLSLSSGSWTLKLHFFQEVLGTSMRALYIVRDPRAWIYSVLYGSKPSLYSLKNVPEHLAKLFKIEEGKSKCNSNSGYAFEYESLKKELEISQSNAISLLSHLWVANTAAALRINTDLLPTNYHLVKFEDIVHFPQKTTERIFAFLGIPLSPASLNQMLFATSTNLFYLPYEGEISPSNTNIWKTNLPRDEIKLIENICWTLMDHLGYPKFMD</sequence>
<keyword id="KW-0325">Glycoprotein</keyword>
<keyword id="KW-0413">Isomerase</keyword>
<keyword id="KW-0472">Membrane</keyword>
<keyword id="KW-1185">Reference proteome</keyword>
<keyword id="KW-0732">Signal</keyword>
<keyword id="KW-0812">Transmembrane</keyword>
<keyword id="KW-1133">Transmembrane helix</keyword>